<feature type="chain" id="PRO_1000141411" description="Large ribosomal subunit protein uL1">
    <location>
        <begin position="1"/>
        <end position="236"/>
    </location>
</feature>
<gene>
    <name evidence="1" type="primary">rplA</name>
    <name type="ordered locus">Helmi_13180</name>
    <name type="ORF">HM1_1366</name>
</gene>
<reference key="1">
    <citation type="journal article" date="2008" name="J. Bacteriol.">
        <title>The genome of Heliobacterium modesticaldum, a phototrophic representative of the Firmicutes containing the simplest photosynthetic apparatus.</title>
        <authorList>
            <person name="Sattley W.M."/>
            <person name="Madigan M.T."/>
            <person name="Swingley W.D."/>
            <person name="Cheung P.C."/>
            <person name="Clocksin K.M."/>
            <person name="Conrad A.L."/>
            <person name="Dejesa L.C."/>
            <person name="Honchak B.M."/>
            <person name="Jung D.O."/>
            <person name="Karbach L.E."/>
            <person name="Kurdoglu A."/>
            <person name="Lahiri S."/>
            <person name="Mastrian S.D."/>
            <person name="Page L.E."/>
            <person name="Taylor H.L."/>
            <person name="Wang Z.T."/>
            <person name="Raymond J."/>
            <person name="Chen M."/>
            <person name="Blankenship R.E."/>
            <person name="Touchman J.W."/>
        </authorList>
    </citation>
    <scope>NUCLEOTIDE SEQUENCE [LARGE SCALE GENOMIC DNA]</scope>
    <source>
        <strain>ATCC 51547 / Ice1</strain>
    </source>
</reference>
<comment type="function">
    <text evidence="1">Binds directly to 23S rRNA. The L1 stalk is quite mobile in the ribosome, and is involved in E site tRNA release.</text>
</comment>
<comment type="function">
    <text evidence="1">Protein L1 is also a translational repressor protein, it controls the translation of the L11 operon by binding to its mRNA.</text>
</comment>
<comment type="subunit">
    <text evidence="1">Part of the 50S ribosomal subunit.</text>
</comment>
<comment type="similarity">
    <text evidence="1">Belongs to the universal ribosomal protein uL1 family.</text>
</comment>
<accession>B0TC44</accession>
<sequence length="236" mass="25428">MPKHGKKYLEQAKLVDRDQVLEAREAMDMVKKLATAKFDETVEVAFRLGVDPRHADQMIRGAVVLPHGTGKSRKVAVFAKGDKAKEAEAAGADAVGAEDLVEKIQGGWLDFDVAVATPDVMGLVGKLGRLLGPKGLMPNPKTGTVTFDVARAIQEIKAGKIEYRVDKTGIIHAPIGKASFDVQKLLENYQTLLDTLIKAKPAAAKGQYIKSITLSSTMSPGVRVNPLKPHALLVQQ</sequence>
<dbReference type="EMBL" id="CP000930">
    <property type="protein sequence ID" value="ABZ83943.1"/>
    <property type="molecule type" value="Genomic_DNA"/>
</dbReference>
<dbReference type="RefSeq" id="WP_012282459.1">
    <property type="nucleotide sequence ID" value="NC_010337.2"/>
</dbReference>
<dbReference type="SMR" id="B0TC44"/>
<dbReference type="STRING" id="498761.HM1_1366"/>
<dbReference type="KEGG" id="hmo:HM1_1366"/>
<dbReference type="eggNOG" id="COG0081">
    <property type="taxonomic scope" value="Bacteria"/>
</dbReference>
<dbReference type="HOGENOM" id="CLU_062853_0_0_9"/>
<dbReference type="OrthoDB" id="9803740at2"/>
<dbReference type="Proteomes" id="UP000008550">
    <property type="component" value="Chromosome"/>
</dbReference>
<dbReference type="GO" id="GO:0015934">
    <property type="term" value="C:large ribosomal subunit"/>
    <property type="evidence" value="ECO:0007669"/>
    <property type="project" value="InterPro"/>
</dbReference>
<dbReference type="GO" id="GO:0019843">
    <property type="term" value="F:rRNA binding"/>
    <property type="evidence" value="ECO:0007669"/>
    <property type="project" value="UniProtKB-UniRule"/>
</dbReference>
<dbReference type="GO" id="GO:0003735">
    <property type="term" value="F:structural constituent of ribosome"/>
    <property type="evidence" value="ECO:0007669"/>
    <property type="project" value="InterPro"/>
</dbReference>
<dbReference type="GO" id="GO:0000049">
    <property type="term" value="F:tRNA binding"/>
    <property type="evidence" value="ECO:0007669"/>
    <property type="project" value="UniProtKB-KW"/>
</dbReference>
<dbReference type="GO" id="GO:0006417">
    <property type="term" value="P:regulation of translation"/>
    <property type="evidence" value="ECO:0007669"/>
    <property type="project" value="UniProtKB-KW"/>
</dbReference>
<dbReference type="GO" id="GO:0006412">
    <property type="term" value="P:translation"/>
    <property type="evidence" value="ECO:0007669"/>
    <property type="project" value="UniProtKB-UniRule"/>
</dbReference>
<dbReference type="CDD" id="cd00403">
    <property type="entry name" value="Ribosomal_L1"/>
    <property type="match status" value="1"/>
</dbReference>
<dbReference type="FunFam" id="3.40.50.790:FF:000001">
    <property type="entry name" value="50S ribosomal protein L1"/>
    <property type="match status" value="1"/>
</dbReference>
<dbReference type="Gene3D" id="3.30.190.20">
    <property type="match status" value="1"/>
</dbReference>
<dbReference type="Gene3D" id="3.40.50.790">
    <property type="match status" value="1"/>
</dbReference>
<dbReference type="HAMAP" id="MF_01318_B">
    <property type="entry name" value="Ribosomal_uL1_B"/>
    <property type="match status" value="1"/>
</dbReference>
<dbReference type="InterPro" id="IPR005878">
    <property type="entry name" value="Ribosom_uL1_bac-type"/>
</dbReference>
<dbReference type="InterPro" id="IPR002143">
    <property type="entry name" value="Ribosomal_uL1"/>
</dbReference>
<dbReference type="InterPro" id="IPR023674">
    <property type="entry name" value="Ribosomal_uL1-like"/>
</dbReference>
<dbReference type="InterPro" id="IPR028364">
    <property type="entry name" value="Ribosomal_uL1/biogenesis"/>
</dbReference>
<dbReference type="InterPro" id="IPR016095">
    <property type="entry name" value="Ribosomal_uL1_3-a/b-sand"/>
</dbReference>
<dbReference type="InterPro" id="IPR023673">
    <property type="entry name" value="Ribosomal_uL1_CS"/>
</dbReference>
<dbReference type="NCBIfam" id="TIGR01169">
    <property type="entry name" value="rplA_bact"/>
    <property type="match status" value="1"/>
</dbReference>
<dbReference type="PANTHER" id="PTHR36427">
    <property type="entry name" value="54S RIBOSOMAL PROTEIN L1, MITOCHONDRIAL"/>
    <property type="match status" value="1"/>
</dbReference>
<dbReference type="PANTHER" id="PTHR36427:SF3">
    <property type="entry name" value="LARGE RIBOSOMAL SUBUNIT PROTEIN UL1M"/>
    <property type="match status" value="1"/>
</dbReference>
<dbReference type="Pfam" id="PF00687">
    <property type="entry name" value="Ribosomal_L1"/>
    <property type="match status" value="1"/>
</dbReference>
<dbReference type="PIRSF" id="PIRSF002155">
    <property type="entry name" value="Ribosomal_L1"/>
    <property type="match status" value="1"/>
</dbReference>
<dbReference type="SUPFAM" id="SSF56808">
    <property type="entry name" value="Ribosomal protein L1"/>
    <property type="match status" value="1"/>
</dbReference>
<dbReference type="PROSITE" id="PS01199">
    <property type="entry name" value="RIBOSOMAL_L1"/>
    <property type="match status" value="1"/>
</dbReference>
<organism>
    <name type="scientific">Heliobacterium modesticaldum (strain ATCC 51547 / Ice1)</name>
    <dbReference type="NCBI Taxonomy" id="498761"/>
    <lineage>
        <taxon>Bacteria</taxon>
        <taxon>Bacillati</taxon>
        <taxon>Bacillota</taxon>
        <taxon>Clostridia</taxon>
        <taxon>Eubacteriales</taxon>
        <taxon>Heliobacteriaceae</taxon>
        <taxon>Heliomicrobium</taxon>
    </lineage>
</organism>
<keyword id="KW-1185">Reference proteome</keyword>
<keyword id="KW-0678">Repressor</keyword>
<keyword id="KW-0687">Ribonucleoprotein</keyword>
<keyword id="KW-0689">Ribosomal protein</keyword>
<keyword id="KW-0694">RNA-binding</keyword>
<keyword id="KW-0699">rRNA-binding</keyword>
<keyword id="KW-0810">Translation regulation</keyword>
<keyword id="KW-0820">tRNA-binding</keyword>
<name>RL1_HELMI</name>
<protein>
    <recommendedName>
        <fullName evidence="1">Large ribosomal subunit protein uL1</fullName>
    </recommendedName>
    <alternativeName>
        <fullName evidence="2">50S ribosomal protein L1</fullName>
    </alternativeName>
</protein>
<proteinExistence type="inferred from homology"/>
<evidence type="ECO:0000255" key="1">
    <source>
        <dbReference type="HAMAP-Rule" id="MF_01318"/>
    </source>
</evidence>
<evidence type="ECO:0000305" key="2"/>